<reference key="1">
    <citation type="journal article" date="2003" name="Nucleic Acids Res.">
        <title>The complete genome sequence and analysis of Corynebacterium diphtheriae NCTC13129.</title>
        <authorList>
            <person name="Cerdeno-Tarraga A.-M."/>
            <person name="Efstratiou A."/>
            <person name="Dover L.G."/>
            <person name="Holden M.T.G."/>
            <person name="Pallen M.J."/>
            <person name="Bentley S.D."/>
            <person name="Besra G.S."/>
            <person name="Churcher C.M."/>
            <person name="James K.D."/>
            <person name="De Zoysa A."/>
            <person name="Chillingworth T."/>
            <person name="Cronin A."/>
            <person name="Dowd L."/>
            <person name="Feltwell T."/>
            <person name="Hamlin N."/>
            <person name="Holroyd S."/>
            <person name="Jagels K."/>
            <person name="Moule S."/>
            <person name="Quail M.A."/>
            <person name="Rabbinowitsch E."/>
            <person name="Rutherford K.M."/>
            <person name="Thomson N.R."/>
            <person name="Unwin L."/>
            <person name="Whitehead S."/>
            <person name="Barrell B.G."/>
            <person name="Parkhill J."/>
        </authorList>
    </citation>
    <scope>NUCLEOTIDE SEQUENCE [LARGE SCALE GENOMIC DNA]</scope>
    <source>
        <strain>ATCC 700971 / NCTC 13129 / Biotype gravis</strain>
    </source>
</reference>
<sequence length="157" mass="16985">MAVKIKLQRLGKIRTPHYRVVVADARTRRDGKVIENIGIYEPKQDPSVIKIDSERAQYWLGVGAQPTEPVLALLKVTGDWQKFKGLEGAEGTLKVAEPKPSKLELFNQALAEANEGPTAEAITEKKKKAKEEAAAKAAAEAEAAAKAEEAPAEEAAE</sequence>
<dbReference type="EMBL" id="BX248358">
    <property type="protein sequence ID" value="CAE50058.1"/>
    <property type="molecule type" value="Genomic_DNA"/>
</dbReference>
<dbReference type="RefSeq" id="WP_003852013.1">
    <property type="nucleotide sequence ID" value="NC_002935.2"/>
</dbReference>
<dbReference type="SMR" id="P62228"/>
<dbReference type="STRING" id="257309.DIP1532"/>
<dbReference type="KEGG" id="cdi:DIP1532"/>
<dbReference type="HOGENOM" id="CLU_100590_1_1_11"/>
<dbReference type="Proteomes" id="UP000002198">
    <property type="component" value="Chromosome"/>
</dbReference>
<dbReference type="GO" id="GO:0005737">
    <property type="term" value="C:cytoplasm"/>
    <property type="evidence" value="ECO:0007669"/>
    <property type="project" value="UniProtKB-ARBA"/>
</dbReference>
<dbReference type="GO" id="GO:0015935">
    <property type="term" value="C:small ribosomal subunit"/>
    <property type="evidence" value="ECO:0007669"/>
    <property type="project" value="TreeGrafter"/>
</dbReference>
<dbReference type="GO" id="GO:0003735">
    <property type="term" value="F:structural constituent of ribosome"/>
    <property type="evidence" value="ECO:0007669"/>
    <property type="project" value="InterPro"/>
</dbReference>
<dbReference type="GO" id="GO:0006412">
    <property type="term" value="P:translation"/>
    <property type="evidence" value="ECO:0007669"/>
    <property type="project" value="UniProtKB-UniRule"/>
</dbReference>
<dbReference type="Gene3D" id="3.30.1320.10">
    <property type="match status" value="1"/>
</dbReference>
<dbReference type="HAMAP" id="MF_00385">
    <property type="entry name" value="Ribosomal_bS16"/>
    <property type="match status" value="1"/>
</dbReference>
<dbReference type="InterPro" id="IPR000307">
    <property type="entry name" value="Ribosomal_bS16"/>
</dbReference>
<dbReference type="InterPro" id="IPR023803">
    <property type="entry name" value="Ribosomal_bS16_dom_sf"/>
</dbReference>
<dbReference type="NCBIfam" id="NF011093">
    <property type="entry name" value="PRK14520.1"/>
    <property type="match status" value="1"/>
</dbReference>
<dbReference type="NCBIfam" id="TIGR00002">
    <property type="entry name" value="S16"/>
    <property type="match status" value="1"/>
</dbReference>
<dbReference type="PANTHER" id="PTHR12919">
    <property type="entry name" value="30S RIBOSOMAL PROTEIN S16"/>
    <property type="match status" value="1"/>
</dbReference>
<dbReference type="PANTHER" id="PTHR12919:SF20">
    <property type="entry name" value="SMALL RIBOSOMAL SUBUNIT PROTEIN BS16M"/>
    <property type="match status" value="1"/>
</dbReference>
<dbReference type="Pfam" id="PF00886">
    <property type="entry name" value="Ribosomal_S16"/>
    <property type="match status" value="1"/>
</dbReference>
<dbReference type="SUPFAM" id="SSF54565">
    <property type="entry name" value="Ribosomal protein S16"/>
    <property type="match status" value="1"/>
</dbReference>
<name>RS16_CORDI</name>
<gene>
    <name evidence="1" type="primary">rpsP</name>
    <name type="ordered locus">DIP1532</name>
</gene>
<feature type="chain" id="PRO_0000167178" description="Small ribosomal subunit protein bS16">
    <location>
        <begin position="1"/>
        <end position="157"/>
    </location>
</feature>
<feature type="region of interest" description="Disordered" evidence="2">
    <location>
        <begin position="114"/>
        <end position="157"/>
    </location>
</feature>
<evidence type="ECO:0000255" key="1">
    <source>
        <dbReference type="HAMAP-Rule" id="MF_00385"/>
    </source>
</evidence>
<evidence type="ECO:0000256" key="2">
    <source>
        <dbReference type="SAM" id="MobiDB-lite"/>
    </source>
</evidence>
<evidence type="ECO:0000305" key="3"/>
<comment type="similarity">
    <text evidence="1">Belongs to the bacterial ribosomal protein bS16 family.</text>
</comment>
<proteinExistence type="inferred from homology"/>
<organism>
    <name type="scientific">Corynebacterium diphtheriae (strain ATCC 700971 / NCTC 13129 / Biotype gravis)</name>
    <dbReference type="NCBI Taxonomy" id="257309"/>
    <lineage>
        <taxon>Bacteria</taxon>
        <taxon>Bacillati</taxon>
        <taxon>Actinomycetota</taxon>
        <taxon>Actinomycetes</taxon>
        <taxon>Mycobacteriales</taxon>
        <taxon>Corynebacteriaceae</taxon>
        <taxon>Corynebacterium</taxon>
    </lineage>
</organism>
<protein>
    <recommendedName>
        <fullName evidence="1">Small ribosomal subunit protein bS16</fullName>
    </recommendedName>
    <alternativeName>
        <fullName evidence="3">30S ribosomal protein S16</fullName>
    </alternativeName>
</protein>
<keyword id="KW-1185">Reference proteome</keyword>
<keyword id="KW-0687">Ribonucleoprotein</keyword>
<keyword id="KW-0689">Ribosomal protein</keyword>
<accession>P62228</accession>